<feature type="chain" id="PRO_1000005174" description="Small ribosomal subunit protein bS21">
    <location>
        <begin position="1"/>
        <end position="71"/>
    </location>
</feature>
<accession>A1RMH9</accession>
<sequence>MPIIKVRENEPFDVALRRFKRSCEKAGILADVRAREFYEKPTTARKRAKAAAVKRLAKKLSRENARRVRLY</sequence>
<reference key="1">
    <citation type="submission" date="2006-12" db="EMBL/GenBank/DDBJ databases">
        <title>Complete sequence of Shewanella sp. W3-18-1.</title>
        <authorList>
            <consortium name="US DOE Joint Genome Institute"/>
            <person name="Copeland A."/>
            <person name="Lucas S."/>
            <person name="Lapidus A."/>
            <person name="Barry K."/>
            <person name="Detter J.C."/>
            <person name="Glavina del Rio T."/>
            <person name="Hammon N."/>
            <person name="Israni S."/>
            <person name="Dalin E."/>
            <person name="Tice H."/>
            <person name="Pitluck S."/>
            <person name="Chain P."/>
            <person name="Malfatti S."/>
            <person name="Shin M."/>
            <person name="Vergez L."/>
            <person name="Schmutz J."/>
            <person name="Larimer F."/>
            <person name="Land M."/>
            <person name="Hauser L."/>
            <person name="Kyrpides N."/>
            <person name="Lykidis A."/>
            <person name="Tiedje J."/>
            <person name="Richardson P."/>
        </authorList>
    </citation>
    <scope>NUCLEOTIDE SEQUENCE [LARGE SCALE GENOMIC DNA]</scope>
    <source>
        <strain>W3-18-1</strain>
    </source>
</reference>
<keyword id="KW-0687">Ribonucleoprotein</keyword>
<keyword id="KW-0689">Ribosomal protein</keyword>
<comment type="similarity">
    <text evidence="1">Belongs to the bacterial ribosomal protein bS21 family.</text>
</comment>
<dbReference type="EMBL" id="CP000503">
    <property type="protein sequence ID" value="ABM25874.1"/>
    <property type="molecule type" value="Genomic_DNA"/>
</dbReference>
<dbReference type="RefSeq" id="WP_006080725.1">
    <property type="nucleotide sequence ID" value="NC_008750.1"/>
</dbReference>
<dbReference type="SMR" id="A1RMH9"/>
<dbReference type="GeneID" id="94729004"/>
<dbReference type="KEGG" id="shw:Sputw3181_3057"/>
<dbReference type="HOGENOM" id="CLU_159258_1_0_6"/>
<dbReference type="Proteomes" id="UP000002597">
    <property type="component" value="Chromosome"/>
</dbReference>
<dbReference type="GO" id="GO:1990904">
    <property type="term" value="C:ribonucleoprotein complex"/>
    <property type="evidence" value="ECO:0007669"/>
    <property type="project" value="UniProtKB-KW"/>
</dbReference>
<dbReference type="GO" id="GO:0005840">
    <property type="term" value="C:ribosome"/>
    <property type="evidence" value="ECO:0007669"/>
    <property type="project" value="UniProtKB-KW"/>
</dbReference>
<dbReference type="GO" id="GO:0003735">
    <property type="term" value="F:structural constituent of ribosome"/>
    <property type="evidence" value="ECO:0007669"/>
    <property type="project" value="InterPro"/>
</dbReference>
<dbReference type="GO" id="GO:0006412">
    <property type="term" value="P:translation"/>
    <property type="evidence" value="ECO:0007669"/>
    <property type="project" value="UniProtKB-UniRule"/>
</dbReference>
<dbReference type="Gene3D" id="1.20.5.1150">
    <property type="entry name" value="Ribosomal protein S8"/>
    <property type="match status" value="1"/>
</dbReference>
<dbReference type="HAMAP" id="MF_00358">
    <property type="entry name" value="Ribosomal_bS21"/>
    <property type="match status" value="1"/>
</dbReference>
<dbReference type="InterPro" id="IPR001911">
    <property type="entry name" value="Ribosomal_bS21"/>
</dbReference>
<dbReference type="InterPro" id="IPR018278">
    <property type="entry name" value="Ribosomal_bS21_CS"/>
</dbReference>
<dbReference type="InterPro" id="IPR038380">
    <property type="entry name" value="Ribosomal_bS21_sf"/>
</dbReference>
<dbReference type="NCBIfam" id="TIGR00030">
    <property type="entry name" value="S21p"/>
    <property type="match status" value="1"/>
</dbReference>
<dbReference type="PANTHER" id="PTHR21109">
    <property type="entry name" value="MITOCHONDRIAL 28S RIBOSOMAL PROTEIN S21"/>
    <property type="match status" value="1"/>
</dbReference>
<dbReference type="PANTHER" id="PTHR21109:SF22">
    <property type="entry name" value="SMALL RIBOSOMAL SUBUNIT PROTEIN BS21"/>
    <property type="match status" value="1"/>
</dbReference>
<dbReference type="Pfam" id="PF01165">
    <property type="entry name" value="Ribosomal_S21"/>
    <property type="match status" value="1"/>
</dbReference>
<dbReference type="PRINTS" id="PR00976">
    <property type="entry name" value="RIBOSOMALS21"/>
</dbReference>
<dbReference type="PROSITE" id="PS01181">
    <property type="entry name" value="RIBOSOMAL_S21"/>
    <property type="match status" value="1"/>
</dbReference>
<gene>
    <name evidence="1" type="primary">rpsU</name>
    <name type="ordered locus">Sputw3181_3057</name>
</gene>
<proteinExistence type="inferred from homology"/>
<name>RS21_SHESW</name>
<evidence type="ECO:0000255" key="1">
    <source>
        <dbReference type="HAMAP-Rule" id="MF_00358"/>
    </source>
</evidence>
<evidence type="ECO:0000305" key="2"/>
<organism>
    <name type="scientific">Shewanella sp. (strain W3-18-1)</name>
    <dbReference type="NCBI Taxonomy" id="351745"/>
    <lineage>
        <taxon>Bacteria</taxon>
        <taxon>Pseudomonadati</taxon>
        <taxon>Pseudomonadota</taxon>
        <taxon>Gammaproteobacteria</taxon>
        <taxon>Alteromonadales</taxon>
        <taxon>Shewanellaceae</taxon>
        <taxon>Shewanella</taxon>
    </lineage>
</organism>
<protein>
    <recommendedName>
        <fullName evidence="1">Small ribosomal subunit protein bS21</fullName>
    </recommendedName>
    <alternativeName>
        <fullName evidence="2">30S ribosomal protein S21</fullName>
    </alternativeName>
</protein>